<comment type="function">
    <text evidence="2 3 4">Involved in chloramphenicol biosynthesis (PubMed:24347692, PubMed:25564306). Catalyzes the six-electron oxidation of an aryl-amine precursor of chloramphenicol (NH2-CAM) to yield the aryl-nitro group of chloramphenicol (CAM) (PubMed:24347692, PubMed:25564306, PubMed:27203126). During catalysis, upon exposure of the diferrous cluster to O(2), ClmI forms an exceptionally long-lived peroxo intermediate (CmlI-peroxo), which reacts with NH2-CAM to form CAM (PubMed:25564306, PubMed:27203126).</text>
</comment>
<comment type="catalytic activity">
    <reaction evidence="2 3 4 6">
        <text>alpha-N-dichloroacetyl-p-aminophenylserinol + AH2 + 2 O2 = chloramphenicol + A + 2 H2O</text>
        <dbReference type="Rhea" id="RHEA:58884"/>
        <dbReference type="ChEBI" id="CHEBI:13193"/>
        <dbReference type="ChEBI" id="CHEBI:15377"/>
        <dbReference type="ChEBI" id="CHEBI:15379"/>
        <dbReference type="ChEBI" id="CHEBI:17499"/>
        <dbReference type="ChEBI" id="CHEBI:17698"/>
        <dbReference type="ChEBI" id="CHEBI:47325"/>
        <dbReference type="EC" id="1.14.99.67"/>
    </reaction>
    <physiologicalReaction direction="left-to-right" evidence="2 3 4 6">
        <dbReference type="Rhea" id="RHEA:58885"/>
    </physiologicalReaction>
</comment>
<comment type="cofactor">
    <cofactor evidence="3 4 5 6">
        <name>Fe(2+)</name>
        <dbReference type="ChEBI" id="CHEBI:29033"/>
    </cofactor>
    <text evidence="3 4 5 6">Contains a nonheme dinuclear iron cluster that stabilizes a peroxo intermediate.</text>
</comment>
<comment type="pathway">
    <text evidence="2 3">Antibiotic biosynthesis.</text>
</comment>
<comment type="similarity">
    <text evidence="8">Belongs to the AurF N-oxygenase family.</text>
</comment>
<protein>
    <recommendedName>
        <fullName evidence="8">Alpha-N-dichloroacetyl-p-aminophenylserinol N-oxygenase</fullName>
        <ecNumber evidence="2 3 4 6">1.14.99.67</ecNumber>
    </recommendedName>
    <alternativeName>
        <fullName evidence="7">Non-heme di-iron N-oxygenase</fullName>
    </alternativeName>
</protein>
<organism>
    <name type="scientific">Streptomyces venezuelae (strain ATCC 10712 / CBS 650.69 / DSM 40230 / JCM 4526 / NBRC 13096 / PD 04745)</name>
    <dbReference type="NCBI Taxonomy" id="953739"/>
    <lineage>
        <taxon>Bacteria</taxon>
        <taxon>Bacillati</taxon>
        <taxon>Actinomycetota</taxon>
        <taxon>Actinomycetes</taxon>
        <taxon>Kitasatosporales</taxon>
        <taxon>Streptomycetaceae</taxon>
        <taxon>Streptomyces</taxon>
    </lineage>
</organism>
<reference key="1">
    <citation type="journal article" date="2011" name="BMC Genomics">
        <title>Genome-wide analysis of the role of GlnR in Streptomyces venezuelae provides new insights into global nitrogen regulation in actinomycetes.</title>
        <authorList>
            <person name="Pullan S.T."/>
            <person name="Chandra G."/>
            <person name="Bibb M.J."/>
            <person name="Merrick M."/>
        </authorList>
    </citation>
    <scope>NUCLEOTIDE SEQUENCE [LARGE SCALE GENOMIC DNA]</scope>
    <source>
        <strain>ATCC 10712 / CBS 650.69 / DSM 40230 / JCM 4526 / NBRC 13096 / PD 04745</strain>
    </source>
</reference>
<reference key="2">
    <citation type="journal article" date="2012" name="Tetrahedron">
        <title>CmlI is an N-oxygenase in the biosynthesis of chloramphenicol.</title>
        <authorList>
            <person name="Lu H."/>
            <person name="Chanco E."/>
            <person name="Zhao H."/>
        </authorList>
    </citation>
    <scope>FUNCTION</scope>
    <scope>CATALYTIC ACTIVITY</scope>
    <scope>PATHWAY</scope>
    <source>
        <strain>ATCC 10712 / CBS 650.69 / DSM 40230 / JCM 4526 / NBRC 13096 / PD 04745</strain>
    </source>
</reference>
<reference key="3">
    <citation type="journal article" date="2015" name="J. Am. Chem. Soc.">
        <title>An unusual peroxo intermediate of the arylamine oxygenase of the chloramphenicol biosynthetic pathway.</title>
        <authorList>
            <person name="Makris T.M."/>
            <person name="Vu V.V."/>
            <person name="Meier K.K."/>
            <person name="Komor A.J."/>
            <person name="Rivard B.S."/>
            <person name="Muenck E."/>
            <person name="Que L. Jr."/>
            <person name="Lipscomb J.D."/>
        </authorList>
    </citation>
    <scope>FUNCTION</scope>
    <scope>CATALYTIC ACTIVITY</scope>
    <scope>COFACTOR</scope>
    <scope>PATHWAY</scope>
</reference>
<reference key="4">
    <citation type="journal article" date="2016" name="J. Am. Chem. Soc.">
        <title>Mechanism for six-electron aryl-N-oxygenation by the non-heme diiron enzyme CmlI.</title>
        <authorList>
            <person name="Komor A.J."/>
            <person name="Rivard B.S."/>
            <person name="Fan R."/>
            <person name="Guo Y."/>
            <person name="Que L. Jr."/>
            <person name="Lipscomb J.D."/>
        </authorList>
    </citation>
    <scope>FUNCTION</scope>
    <scope>CATALYTIC ACTIVITY</scope>
    <scope>REACTION MECHANISM</scope>
    <scope>COFACTOR</scope>
</reference>
<reference key="5">
    <citation type="journal article" date="2017" name="Biochemistry">
        <title>CmlI N-oxygenase catalyzes the final three steps in chloramphenicol biosynthesis without dissociation of intermediates.</title>
        <authorList>
            <person name="Komor A.J."/>
            <person name="Rivard B.S."/>
            <person name="Fan R."/>
            <person name="Guo Y."/>
            <person name="Que L. Jr."/>
            <person name="Lipscomb J.D."/>
        </authorList>
    </citation>
    <scope>CATALYTIC ACTIVITY</scope>
    <scope>REACTION MECHANISM</scope>
    <scope>COFACTOR</scope>
</reference>
<reference evidence="10 11" key="6">
    <citation type="journal article" date="2016" name="J. Biol. Inorg. Chem.">
        <title>Crystal structure of CmlI, the arylamine oxygenase from the chloramphenicol biosynthetic pathway.</title>
        <authorList>
            <person name="Knoot C.J."/>
            <person name="Kovaleva E.G."/>
            <person name="Lipscomb J.D."/>
        </authorList>
    </citation>
    <scope>X-RAY CRYSTALLOGRAPHY (2.03 ANGSTROMS) OF 33-339 IN COMPLEX WITH IRON</scope>
    <scope>COFACTOR</scope>
</reference>
<keyword id="KW-0002">3D-structure</keyword>
<keyword id="KW-0045">Antibiotic biosynthesis</keyword>
<keyword id="KW-0408">Iron</keyword>
<keyword id="KW-0479">Metal-binding</keyword>
<keyword id="KW-0560">Oxidoreductase</keyword>
<keyword id="KW-1185">Reference proteome</keyword>
<dbReference type="EC" id="1.14.99.67" evidence="2 3 4 6"/>
<dbReference type="EMBL" id="FR845719">
    <property type="protein sequence ID" value="CCA54211.1"/>
    <property type="molecule type" value="Genomic_DNA"/>
</dbReference>
<dbReference type="RefSeq" id="WP_015032130.1">
    <property type="nucleotide sequence ID" value="NZ_JABVZO010000225.1"/>
</dbReference>
<dbReference type="PDB" id="5HYG">
    <property type="method" value="X-ray"/>
    <property type="resolution" value="2.03 A"/>
    <property type="chains" value="A=33-339"/>
</dbReference>
<dbReference type="PDB" id="5HYH">
    <property type="method" value="X-ray"/>
    <property type="resolution" value="2.03 A"/>
    <property type="chains" value="A=33-339"/>
</dbReference>
<dbReference type="PDBsum" id="5HYG"/>
<dbReference type="PDBsum" id="5HYH"/>
<dbReference type="SMR" id="F2RB83"/>
<dbReference type="STRING" id="953739.SVEN_0924"/>
<dbReference type="KEGG" id="sve:SVEN_0924"/>
<dbReference type="PATRIC" id="fig|953739.5.peg.2970"/>
<dbReference type="eggNOG" id="ENOG502ZAK9">
    <property type="taxonomic scope" value="Bacteria"/>
</dbReference>
<dbReference type="HOGENOM" id="CLU_070306_0_0_11"/>
<dbReference type="OrthoDB" id="581579at2"/>
<dbReference type="BioCyc" id="MetaCyc:MONOMER-20699"/>
<dbReference type="BRENDA" id="1.14.99.67">
    <property type="organism ID" value="6106"/>
</dbReference>
<dbReference type="EvolutionaryTrace" id="F2RB83"/>
<dbReference type="Proteomes" id="UP000006854">
    <property type="component" value="Chromosome"/>
</dbReference>
<dbReference type="GO" id="GO:0046872">
    <property type="term" value="F:metal ion binding"/>
    <property type="evidence" value="ECO:0007669"/>
    <property type="project" value="UniProtKB-KW"/>
</dbReference>
<dbReference type="GO" id="GO:0016491">
    <property type="term" value="F:oxidoreductase activity"/>
    <property type="evidence" value="ECO:0007669"/>
    <property type="project" value="UniProtKB-KW"/>
</dbReference>
<dbReference type="GO" id="GO:0017000">
    <property type="term" value="P:antibiotic biosynthetic process"/>
    <property type="evidence" value="ECO:0007669"/>
    <property type="project" value="UniProtKB-KW"/>
</dbReference>
<dbReference type="Gene3D" id="1.10.620.20">
    <property type="entry name" value="Ribonucleotide Reductase, subunit A"/>
    <property type="match status" value="1"/>
</dbReference>
<dbReference type="InterPro" id="IPR025859">
    <property type="entry name" value="AurF/CmlI"/>
</dbReference>
<dbReference type="InterPro" id="IPR012348">
    <property type="entry name" value="RNR-like"/>
</dbReference>
<dbReference type="Pfam" id="PF11583">
    <property type="entry name" value="AurF"/>
    <property type="match status" value="1"/>
</dbReference>
<sequence length="339" mass="38249">MRDHTDEKSEAAGNDDGHVRIGGLPAFDPDDPAENAVINRLVGNWHRRAAVKREEPDVYALFDPGRPDFREDMIPFRGHPIWERLSDETRSRLLSWGWVAYNRNTVLIEQRIANPAFELVIGGAYPGLGGQQLELAVAQAMVDEQYHTLMHINGSAVTRRMRRSDFSDRVLPDSHITTIHQEHLDRCEEPWQRSLTTLGFATVAEISINAYLDLLADDQEIQVVNSTTVKLHNRDEYCHASISGEMMKQVYEALPADRRRFLLEKVVAGLEAFVAPDFTTWESIVAFEGVPGWEKAAAEVREAQGGTHLVQDHSGIHTLLTEMDVLDQVEFGWGTTVTR</sequence>
<gene>
    <name evidence="7" type="primary">cmlI</name>
    <name evidence="9" type="ordered locus">SVEN_0924</name>
</gene>
<evidence type="ECO:0000256" key="1">
    <source>
        <dbReference type="SAM" id="MobiDB-lite"/>
    </source>
</evidence>
<evidence type="ECO:0000269" key="2">
    <source>
    </source>
</evidence>
<evidence type="ECO:0000269" key="3">
    <source>
    </source>
</evidence>
<evidence type="ECO:0000269" key="4">
    <source>
    </source>
</evidence>
<evidence type="ECO:0000269" key="5">
    <source>
    </source>
</evidence>
<evidence type="ECO:0000269" key="6">
    <source>
    </source>
</evidence>
<evidence type="ECO:0000303" key="7">
    <source>
    </source>
</evidence>
<evidence type="ECO:0000305" key="8"/>
<evidence type="ECO:0000312" key="9">
    <source>
        <dbReference type="EMBL" id="CCA54211.1"/>
    </source>
</evidence>
<evidence type="ECO:0007744" key="10">
    <source>
        <dbReference type="PDB" id="5HYG"/>
    </source>
</evidence>
<evidence type="ECO:0007744" key="11">
    <source>
        <dbReference type="PDB" id="5HYH"/>
    </source>
</evidence>
<evidence type="ECO:0007829" key="12">
    <source>
        <dbReference type="PDB" id="5HYG"/>
    </source>
</evidence>
<proteinExistence type="evidence at protein level"/>
<name>CMLI_STRVP</name>
<accession>F2RB83</accession>
<feature type="chain" id="PRO_0000447294" description="Alpha-N-dichloroacetyl-p-aminophenylserinol N-oxygenase">
    <location>
        <begin position="1"/>
        <end position="339"/>
    </location>
</feature>
<feature type="region of interest" description="Disordered" evidence="1">
    <location>
        <begin position="1"/>
        <end position="22"/>
    </location>
</feature>
<feature type="compositionally biased region" description="Basic and acidic residues" evidence="1">
    <location>
        <begin position="1"/>
        <end position="19"/>
    </location>
</feature>
<feature type="binding site" evidence="5">
    <location>
        <position position="109"/>
    </location>
    <ligand>
        <name>Fe cation</name>
        <dbReference type="ChEBI" id="CHEBI:24875"/>
        <label>1</label>
    </ligand>
</feature>
<feature type="binding site" evidence="5">
    <location>
        <position position="144"/>
    </location>
    <ligand>
        <name>Fe cation</name>
        <dbReference type="ChEBI" id="CHEBI:24875"/>
        <label>1</label>
    </ligand>
</feature>
<feature type="binding site" evidence="5">
    <location>
        <position position="144"/>
    </location>
    <ligand>
        <name>Fe cation</name>
        <dbReference type="ChEBI" id="CHEBI:24875"/>
        <label>2</label>
    </ligand>
</feature>
<feature type="binding site" evidence="5">
    <location>
        <position position="147"/>
    </location>
    <ligand>
        <name>Fe cation</name>
        <dbReference type="ChEBI" id="CHEBI:24875"/>
        <label>1</label>
    </ligand>
</feature>
<feature type="binding site" evidence="5">
    <location>
        <position position="205"/>
    </location>
    <ligand>
        <name>Fe cation</name>
        <dbReference type="ChEBI" id="CHEBI:24875"/>
        <label>2</label>
    </ligand>
</feature>
<feature type="binding site" evidence="5">
    <location>
        <position position="232"/>
    </location>
    <ligand>
        <name>Fe cation</name>
        <dbReference type="ChEBI" id="CHEBI:24875"/>
        <label>1</label>
    </ligand>
</feature>
<feature type="binding site" evidence="5">
    <location>
        <position position="236"/>
    </location>
    <ligand>
        <name>Fe cation</name>
        <dbReference type="ChEBI" id="CHEBI:24875"/>
        <label>1</label>
    </ligand>
</feature>
<feature type="binding site" evidence="5">
    <location>
        <position position="236"/>
    </location>
    <ligand>
        <name>Fe cation</name>
        <dbReference type="ChEBI" id="CHEBI:24875"/>
        <label>2</label>
    </ligand>
</feature>
<feature type="binding site" evidence="5">
    <location>
        <position position="239"/>
    </location>
    <ligand>
        <name>Fe cation</name>
        <dbReference type="ChEBI" id="CHEBI:24875"/>
        <label>2</label>
    </ligand>
</feature>
<feature type="helix" evidence="12">
    <location>
        <begin position="36"/>
        <end position="48"/>
    </location>
</feature>
<feature type="helix" evidence="12">
    <location>
        <begin position="71"/>
        <end position="73"/>
    </location>
</feature>
<feature type="helix" evidence="12">
    <location>
        <begin position="75"/>
        <end position="78"/>
    </location>
</feature>
<feature type="helix" evidence="12">
    <location>
        <begin position="80"/>
        <end position="84"/>
    </location>
</feature>
<feature type="helix" evidence="12">
    <location>
        <begin position="87"/>
        <end position="111"/>
    </location>
</feature>
<feature type="helix" evidence="12">
    <location>
        <begin position="113"/>
        <end position="122"/>
    </location>
</feature>
<feature type="helix" evidence="12">
    <location>
        <begin position="131"/>
        <end position="162"/>
    </location>
</feature>
<feature type="helix" evidence="12">
    <location>
        <begin position="168"/>
        <end position="170"/>
    </location>
</feature>
<feature type="helix" evidence="12">
    <location>
        <begin position="175"/>
        <end position="186"/>
    </location>
</feature>
<feature type="helix" evidence="12">
    <location>
        <begin position="190"/>
        <end position="216"/>
    </location>
</feature>
<feature type="strand" evidence="12">
    <location>
        <begin position="219"/>
        <end position="221"/>
    </location>
</feature>
<feature type="helix" evidence="12">
    <location>
        <begin position="223"/>
        <end position="253"/>
    </location>
</feature>
<feature type="helix" evidence="12">
    <location>
        <begin position="256"/>
        <end position="274"/>
    </location>
</feature>
<feature type="helix" evidence="12">
    <location>
        <begin position="278"/>
        <end position="287"/>
    </location>
</feature>
<feature type="helix" evidence="12">
    <location>
        <begin position="293"/>
        <end position="304"/>
    </location>
</feature>
<feature type="helix" evidence="12">
    <location>
        <begin position="314"/>
        <end position="322"/>
    </location>
</feature>